<reference key="1">
    <citation type="journal article" date="2011" name="Stand. Genomic Sci.">
        <title>Complete genome sequence of 'Thioalkalivibrio sulfidophilus' HL-EbGr7.</title>
        <authorList>
            <person name="Muyzer G."/>
            <person name="Sorokin D.Y."/>
            <person name="Mavromatis K."/>
            <person name="Lapidus A."/>
            <person name="Clum A."/>
            <person name="Ivanova N."/>
            <person name="Pati A."/>
            <person name="d'Haeseleer P."/>
            <person name="Woyke T."/>
            <person name="Kyrpides N.C."/>
        </authorList>
    </citation>
    <scope>NUCLEOTIDE SEQUENCE [LARGE SCALE GENOMIC DNA]</scope>
    <source>
        <strain>HL-EbGR7</strain>
    </source>
</reference>
<proteinExistence type="inferred from homology"/>
<protein>
    <recommendedName>
        <fullName evidence="1">Protein-export protein SecB</fullName>
    </recommendedName>
</protein>
<keyword id="KW-0143">Chaperone</keyword>
<keyword id="KW-0963">Cytoplasm</keyword>
<keyword id="KW-0653">Protein transport</keyword>
<keyword id="KW-1185">Reference proteome</keyword>
<keyword id="KW-0811">Translocation</keyword>
<keyword id="KW-0813">Transport</keyword>
<organism>
    <name type="scientific">Thioalkalivibrio sulfidiphilus (strain HL-EbGR7)</name>
    <dbReference type="NCBI Taxonomy" id="396588"/>
    <lineage>
        <taxon>Bacteria</taxon>
        <taxon>Pseudomonadati</taxon>
        <taxon>Pseudomonadota</taxon>
        <taxon>Gammaproteobacteria</taxon>
        <taxon>Chromatiales</taxon>
        <taxon>Ectothiorhodospiraceae</taxon>
        <taxon>Thioalkalivibrio</taxon>
    </lineage>
</organism>
<accession>B8GR95</accession>
<gene>
    <name evidence="1" type="primary">secB</name>
    <name type="ordered locus">Tgr7_3282</name>
</gene>
<feature type="chain" id="PRO_1000148710" description="Protein-export protein SecB">
    <location>
        <begin position="1"/>
        <end position="168"/>
    </location>
</feature>
<dbReference type="EMBL" id="CP001339">
    <property type="protein sequence ID" value="ACL74349.1"/>
    <property type="molecule type" value="Genomic_DNA"/>
</dbReference>
<dbReference type="RefSeq" id="WP_012639811.1">
    <property type="nucleotide sequence ID" value="NC_011901.1"/>
</dbReference>
<dbReference type="SMR" id="B8GR95"/>
<dbReference type="STRING" id="396588.Tgr7_3282"/>
<dbReference type="KEGG" id="tgr:Tgr7_3282"/>
<dbReference type="eggNOG" id="COG1952">
    <property type="taxonomic scope" value="Bacteria"/>
</dbReference>
<dbReference type="HOGENOM" id="CLU_111574_1_0_6"/>
<dbReference type="OrthoDB" id="9795145at2"/>
<dbReference type="Proteomes" id="UP000002383">
    <property type="component" value="Chromosome"/>
</dbReference>
<dbReference type="GO" id="GO:0005737">
    <property type="term" value="C:cytoplasm"/>
    <property type="evidence" value="ECO:0007669"/>
    <property type="project" value="UniProtKB-SubCell"/>
</dbReference>
<dbReference type="GO" id="GO:0051082">
    <property type="term" value="F:unfolded protein binding"/>
    <property type="evidence" value="ECO:0007669"/>
    <property type="project" value="InterPro"/>
</dbReference>
<dbReference type="GO" id="GO:0006457">
    <property type="term" value="P:protein folding"/>
    <property type="evidence" value="ECO:0007669"/>
    <property type="project" value="UniProtKB-UniRule"/>
</dbReference>
<dbReference type="GO" id="GO:0051262">
    <property type="term" value="P:protein tetramerization"/>
    <property type="evidence" value="ECO:0007669"/>
    <property type="project" value="InterPro"/>
</dbReference>
<dbReference type="GO" id="GO:0015031">
    <property type="term" value="P:protein transport"/>
    <property type="evidence" value="ECO:0007669"/>
    <property type="project" value="UniProtKB-UniRule"/>
</dbReference>
<dbReference type="Gene3D" id="3.10.420.10">
    <property type="entry name" value="SecB-like"/>
    <property type="match status" value="1"/>
</dbReference>
<dbReference type="HAMAP" id="MF_00821">
    <property type="entry name" value="SecB"/>
    <property type="match status" value="1"/>
</dbReference>
<dbReference type="InterPro" id="IPR003708">
    <property type="entry name" value="SecB"/>
</dbReference>
<dbReference type="InterPro" id="IPR035958">
    <property type="entry name" value="SecB-like_sf"/>
</dbReference>
<dbReference type="NCBIfam" id="NF004393">
    <property type="entry name" value="PRK05751.1-4"/>
    <property type="match status" value="1"/>
</dbReference>
<dbReference type="NCBIfam" id="TIGR00809">
    <property type="entry name" value="secB"/>
    <property type="match status" value="1"/>
</dbReference>
<dbReference type="PANTHER" id="PTHR36918">
    <property type="match status" value="1"/>
</dbReference>
<dbReference type="PANTHER" id="PTHR36918:SF1">
    <property type="entry name" value="PROTEIN-EXPORT PROTEIN SECB"/>
    <property type="match status" value="1"/>
</dbReference>
<dbReference type="Pfam" id="PF02556">
    <property type="entry name" value="SecB"/>
    <property type="match status" value="1"/>
</dbReference>
<dbReference type="PRINTS" id="PR01594">
    <property type="entry name" value="SECBCHAPRONE"/>
</dbReference>
<dbReference type="SUPFAM" id="SSF54611">
    <property type="entry name" value="SecB-like"/>
    <property type="match status" value="1"/>
</dbReference>
<comment type="function">
    <text evidence="1">One of the proteins required for the normal export of preproteins out of the cell cytoplasm. It is a molecular chaperone that binds to a subset of precursor proteins, maintaining them in a translocation-competent state. It also specifically binds to its receptor SecA.</text>
</comment>
<comment type="subunit">
    <text evidence="1">Homotetramer, a dimer of dimers. One homotetramer interacts with 1 SecA dimer.</text>
</comment>
<comment type="subcellular location">
    <subcellularLocation>
        <location evidence="1">Cytoplasm</location>
    </subcellularLocation>
</comment>
<comment type="similarity">
    <text evidence="1">Belongs to the SecB family.</text>
</comment>
<evidence type="ECO:0000255" key="1">
    <source>
        <dbReference type="HAMAP-Rule" id="MF_00821"/>
    </source>
</evidence>
<sequence>MTDSQQPGAATEQPKTEFALQKFYLKDVSLECPRSPQVFTGEWKPETNVQLNSQARPLDDQGLFEVELTLTVTTKSGGEVAYLVEVKQAGVFLARGFPKEQMGHLLAAYCPTTLFPFAREAVTDLVSKAGFPQMLLAPVNFDALYAQQLAQNHAGKAGEESAPAGASH</sequence>
<name>SECB_THISH</name>